<geneLocation type="plasmid">
    <name>IncJ pMERPH</name>
</geneLocation>
<comment type="function">
    <text evidence="1">Involved in mercury resistance. Probably transfers a mercuric ion from the periplasmic Hg(2+)-binding protein MerP to the cytoplasmic mercuric reductase MerA.</text>
</comment>
<comment type="subcellular location">
    <subcellularLocation>
        <location evidence="3">Cell inner membrane</location>
        <topology evidence="2">Multi-pass membrane protein</topology>
    </subcellularLocation>
</comment>
<comment type="similarity">
    <text evidence="3">Belongs to the MerT family.</text>
</comment>
<gene>
    <name type="primary">merT</name>
</gene>
<dbReference type="EMBL" id="Z49196">
    <property type="protein sequence ID" value="CAA89054.1"/>
    <property type="molecule type" value="Genomic_DNA"/>
</dbReference>
<dbReference type="SMR" id="Q54462"/>
<dbReference type="GO" id="GO:0005886">
    <property type="term" value="C:plasma membrane"/>
    <property type="evidence" value="ECO:0007669"/>
    <property type="project" value="UniProtKB-SubCell"/>
</dbReference>
<dbReference type="GO" id="GO:0015097">
    <property type="term" value="F:mercury ion transmembrane transporter activity"/>
    <property type="evidence" value="ECO:0007669"/>
    <property type="project" value="InterPro"/>
</dbReference>
<dbReference type="GO" id="GO:0046872">
    <property type="term" value="F:metal ion binding"/>
    <property type="evidence" value="ECO:0007669"/>
    <property type="project" value="UniProtKB-KW"/>
</dbReference>
<dbReference type="Gene3D" id="1.10.287.910">
    <property type="entry name" value="bacterial mercury transporter, merf"/>
    <property type="match status" value="1"/>
</dbReference>
<dbReference type="InterPro" id="IPR003457">
    <property type="entry name" value="Transprt_MerT"/>
</dbReference>
<dbReference type="Pfam" id="PF02411">
    <property type="entry name" value="MerT"/>
    <property type="match status" value="1"/>
</dbReference>
<reference key="1">
    <citation type="journal article" date="1997" name="FEMS Microbiol. Rev.">
        <title>Distribution, diversity and evolution of the bacterial mercury resistance (mer) operon.</title>
        <authorList>
            <person name="Osborn A.M."/>
            <person name="Bruce K.D."/>
            <person name="Strike P."/>
            <person name="Ritchie D.A."/>
        </authorList>
    </citation>
    <scope>NUCLEOTIDE SEQUENCE [GENOMIC DNA]</scope>
</reference>
<keyword id="KW-0997">Cell inner membrane</keyword>
<keyword id="KW-1003">Cell membrane</keyword>
<keyword id="KW-0472">Membrane</keyword>
<keyword id="KW-0475">Mercuric resistance</keyword>
<keyword id="KW-0476">Mercury</keyword>
<keyword id="KW-0479">Metal-binding</keyword>
<keyword id="KW-0614">Plasmid</keyword>
<keyword id="KW-0812">Transmembrane</keyword>
<keyword id="KW-1133">Transmembrane helix</keyword>
<keyword id="KW-0813">Transport</keyword>
<accession>Q54462</accession>
<sequence length="115" mass="12555">MSKSNPNFPIIGGVIAAIGAGLCCAGPFVLLLLGVSGSWIGNLTLLEPYRPIFILLVLALFGFAGWKVYRPVEDCEPGTSCAVPQVRKRRQVIFWLTALTALVLVTSNYWIVWFA</sequence>
<protein>
    <recommendedName>
        <fullName evidence="1">Mercuric transport protein MerT</fullName>
    </recommendedName>
    <alternativeName>
        <fullName evidence="1">Mercury ion transport protein</fullName>
    </alternativeName>
</protein>
<proteinExistence type="inferred from homology"/>
<evidence type="ECO:0000250" key="1">
    <source>
        <dbReference type="UniProtKB" id="P04140"/>
    </source>
</evidence>
<evidence type="ECO:0000255" key="2"/>
<evidence type="ECO:0000305" key="3"/>
<name>MERT_SHEPU</name>
<organism>
    <name type="scientific">Shewanella putrefaciens</name>
    <name type="common">Pseudomonas putrefaciens</name>
    <dbReference type="NCBI Taxonomy" id="24"/>
    <lineage>
        <taxon>Bacteria</taxon>
        <taxon>Pseudomonadati</taxon>
        <taxon>Pseudomonadota</taxon>
        <taxon>Gammaproteobacteria</taxon>
        <taxon>Alteromonadales</taxon>
        <taxon>Shewanellaceae</taxon>
        <taxon>Shewanella</taxon>
    </lineage>
</organism>
<feature type="chain" id="PRO_0000096434" description="Mercuric transport protein MerT">
    <location>
        <begin position="1"/>
        <end position="115"/>
    </location>
</feature>
<feature type="transmembrane region" description="Helical" evidence="2">
    <location>
        <begin position="10"/>
        <end position="30"/>
    </location>
</feature>
<feature type="transmembrane region" description="Helical" evidence="2">
    <location>
        <begin position="45"/>
        <end position="65"/>
    </location>
</feature>
<feature type="transmembrane region" description="Helical" evidence="2">
    <location>
        <begin position="92"/>
        <end position="112"/>
    </location>
</feature>
<feature type="binding site" evidence="1">
    <location>
        <position position="23"/>
    </location>
    <ligand>
        <name>Hg(2+)</name>
        <dbReference type="ChEBI" id="CHEBI:16793"/>
    </ligand>
</feature>
<feature type="binding site" evidence="1">
    <location>
        <position position="24"/>
    </location>
    <ligand>
        <name>Hg(2+)</name>
        <dbReference type="ChEBI" id="CHEBI:16793"/>
    </ligand>
</feature>
<feature type="binding site" evidence="1">
    <location>
        <position position="75"/>
    </location>
    <ligand>
        <name>Hg(2+)</name>
        <dbReference type="ChEBI" id="CHEBI:16793"/>
    </ligand>
</feature>
<feature type="binding site" evidence="1">
    <location>
        <position position="81"/>
    </location>
    <ligand>
        <name>Hg(2+)</name>
        <dbReference type="ChEBI" id="CHEBI:16793"/>
    </ligand>
</feature>